<proteinExistence type="evidence at transcript level"/>
<accession>O19105</accession>
<gene>
    <name type="primary">SLC1A5</name>
    <name type="synonym">ASCT2</name>
</gene>
<name>AAAT_RABIT</name>
<organism>
    <name type="scientific">Oryctolagus cuniculus</name>
    <name type="common">Rabbit</name>
    <dbReference type="NCBI Taxonomy" id="9986"/>
    <lineage>
        <taxon>Eukaryota</taxon>
        <taxon>Metazoa</taxon>
        <taxon>Chordata</taxon>
        <taxon>Craniata</taxon>
        <taxon>Vertebrata</taxon>
        <taxon>Euteleostomi</taxon>
        <taxon>Mammalia</taxon>
        <taxon>Eutheria</taxon>
        <taxon>Euarchontoglires</taxon>
        <taxon>Glires</taxon>
        <taxon>Lagomorpha</taxon>
        <taxon>Leporidae</taxon>
        <taxon>Oryctolagus</taxon>
    </lineage>
</organism>
<dbReference type="EMBL" id="U75284">
    <property type="protein sequence ID" value="AAB66298.1"/>
    <property type="molecule type" value="mRNA"/>
</dbReference>
<dbReference type="RefSeq" id="NP_001075847.1">
    <property type="nucleotide sequence ID" value="NM_001082378.1"/>
</dbReference>
<dbReference type="SMR" id="O19105"/>
<dbReference type="FunCoup" id="O19105">
    <property type="interactions" value="6"/>
</dbReference>
<dbReference type="STRING" id="9986.ENSOCUP00000007892"/>
<dbReference type="GlyCosmos" id="O19105">
    <property type="glycosylation" value="2 sites, No reported glycans"/>
</dbReference>
<dbReference type="GeneID" id="100009234"/>
<dbReference type="KEGG" id="ocu:100009234"/>
<dbReference type="CTD" id="6510"/>
<dbReference type="InParanoid" id="O19105"/>
<dbReference type="OrthoDB" id="5877963at2759"/>
<dbReference type="Proteomes" id="UP000001811">
    <property type="component" value="Unplaced"/>
</dbReference>
<dbReference type="GO" id="GO:0042470">
    <property type="term" value="C:melanosome"/>
    <property type="evidence" value="ECO:0007669"/>
    <property type="project" value="UniProtKB-SubCell"/>
</dbReference>
<dbReference type="GO" id="GO:0016020">
    <property type="term" value="C:membrane"/>
    <property type="evidence" value="ECO:0000250"/>
    <property type="project" value="UniProtKB"/>
</dbReference>
<dbReference type="GO" id="GO:0005886">
    <property type="term" value="C:plasma membrane"/>
    <property type="evidence" value="ECO:0000250"/>
    <property type="project" value="UniProtKB"/>
</dbReference>
<dbReference type="GO" id="GO:0015297">
    <property type="term" value="F:antiporter activity"/>
    <property type="evidence" value="ECO:0007669"/>
    <property type="project" value="UniProtKB-KW"/>
</dbReference>
<dbReference type="GO" id="GO:0015183">
    <property type="term" value="F:L-aspartate transmembrane transporter activity"/>
    <property type="evidence" value="ECO:0007669"/>
    <property type="project" value="TreeGrafter"/>
</dbReference>
<dbReference type="GO" id="GO:0015186">
    <property type="term" value="F:L-glutamine transmembrane transporter activity"/>
    <property type="evidence" value="ECO:0000250"/>
    <property type="project" value="UniProtKB"/>
</dbReference>
<dbReference type="GO" id="GO:0046872">
    <property type="term" value="F:metal ion binding"/>
    <property type="evidence" value="ECO:0007669"/>
    <property type="project" value="UniProtKB-KW"/>
</dbReference>
<dbReference type="GO" id="GO:0015293">
    <property type="term" value="F:symporter activity"/>
    <property type="evidence" value="ECO:0007669"/>
    <property type="project" value="UniProtKB-KW"/>
</dbReference>
<dbReference type="GO" id="GO:0006868">
    <property type="term" value="P:glutamine transport"/>
    <property type="evidence" value="ECO:0000250"/>
    <property type="project" value="UniProtKB"/>
</dbReference>
<dbReference type="GO" id="GO:0140009">
    <property type="term" value="P:L-aspartate import across plasma membrane"/>
    <property type="evidence" value="ECO:0007669"/>
    <property type="project" value="TreeGrafter"/>
</dbReference>
<dbReference type="GO" id="GO:0070207">
    <property type="term" value="P:protein homotrimerization"/>
    <property type="evidence" value="ECO:0000250"/>
    <property type="project" value="UniProtKB"/>
</dbReference>
<dbReference type="FunFam" id="1.10.3860.10:FF:000005">
    <property type="entry name" value="Amino acid transporter"/>
    <property type="match status" value="1"/>
</dbReference>
<dbReference type="Gene3D" id="1.10.3860.10">
    <property type="entry name" value="Sodium:dicarboxylate symporter"/>
    <property type="match status" value="1"/>
</dbReference>
<dbReference type="InterPro" id="IPR050746">
    <property type="entry name" value="DAACS"/>
</dbReference>
<dbReference type="InterPro" id="IPR001991">
    <property type="entry name" value="Na-dicarboxylate_symporter"/>
</dbReference>
<dbReference type="InterPro" id="IPR018107">
    <property type="entry name" value="Na-dicarboxylate_symporter_CS"/>
</dbReference>
<dbReference type="InterPro" id="IPR036458">
    <property type="entry name" value="Na:dicarbo_symporter_sf"/>
</dbReference>
<dbReference type="PANTHER" id="PTHR11958:SF19">
    <property type="entry name" value="NEUTRAL AMINO ACID TRANSPORTER B(0)"/>
    <property type="match status" value="1"/>
</dbReference>
<dbReference type="PANTHER" id="PTHR11958">
    <property type="entry name" value="SODIUM/DICARBOXYLATE SYMPORTER-RELATED"/>
    <property type="match status" value="1"/>
</dbReference>
<dbReference type="Pfam" id="PF00375">
    <property type="entry name" value="SDF"/>
    <property type="match status" value="1"/>
</dbReference>
<dbReference type="PRINTS" id="PR00173">
    <property type="entry name" value="EDTRNSPORT"/>
</dbReference>
<dbReference type="SUPFAM" id="SSF118215">
    <property type="entry name" value="Proton glutamate symport protein"/>
    <property type="match status" value="1"/>
</dbReference>
<dbReference type="PROSITE" id="PS00713">
    <property type="entry name" value="NA_DICARBOXYL_SYMP_1"/>
    <property type="match status" value="1"/>
</dbReference>
<dbReference type="PROSITE" id="PS00714">
    <property type="entry name" value="NA_DICARBOXYL_SYMP_2"/>
    <property type="match status" value="1"/>
</dbReference>
<comment type="function">
    <text evidence="1 5 8">Sodium-coupled antiporter of neutral amino acids. In a tri-substrate transport cycle, exchanges neutral amino acids between the extracellular and intracellular compartments, coupled to the inward cotransport of at least one sodium ion (By similarity) (PubMed:9227483). The preferred substrate is the essential amino acid L-glutamine, a precursor for biosynthesis of proteins, nucleotides and amine sugars as well as an alternative fuel for mitochondrial oxidative phosphorylation. Exchanges L-glutamine with other neutral amino acids such as L-serine, L-threonine and L-asparagine in a bidirectional way. Provides L-glutamine to proliferating stem and activated cells driving the metabolic switch toward cell differentiation (By similarity). The transport cycle is usually pH-independent, with the exception of L-glutamate. Transports extracellular L-glutamate coupled to the cotransport of one proton and one sodium ion in exchange for intracellular L-glutamine counter-ion. May provide for L-glutamate uptake in glial cells regulating glutamine/glutamate cycle in the nervous system (By similarity). Can transport D-amino acids. Mediates D-serine release from the retinal glia potentially affecting NMDA receptor function in retinal neurons (By similarity). Displays sodium- and amino acid-dependent but uncoupled channel-like anion conductance with a preference SCN(-) &gt;&gt; NO3(-) &gt; I(-) &gt; Cl(-) (By similarity). Through binding of the fusogenic protein syncytin-1/ERVW-1 may mediate trophoblasts syncytialization, the spontaneous fusion of their plasma membranes, an essential process in placental development (By similarity).</text>
</comment>
<comment type="catalytic activity">
    <reaction evidence="5">
        <text>L-glutamine(out) + L-serine(in) + Na(+)(out) = L-glutamine(in) + L-serine(out) + Na(+)(in)</text>
        <dbReference type="Rhea" id="RHEA:70855"/>
        <dbReference type="ChEBI" id="CHEBI:29101"/>
        <dbReference type="ChEBI" id="CHEBI:33384"/>
        <dbReference type="ChEBI" id="CHEBI:58359"/>
    </reaction>
</comment>
<comment type="catalytic activity">
    <reaction evidence="5">
        <text>L-glutamine(in) + L-serine(out) + Na(+)(out) = L-glutamine(out) + L-serine(in) + Na(+)(in)</text>
        <dbReference type="Rhea" id="RHEA:70887"/>
        <dbReference type="ChEBI" id="CHEBI:29101"/>
        <dbReference type="ChEBI" id="CHEBI:33384"/>
        <dbReference type="ChEBI" id="CHEBI:58359"/>
    </reaction>
</comment>
<comment type="catalytic activity">
    <reaction evidence="5">
        <text>L-threonine(in) + L-glutamine(out) + Na(+)(out) = L-threonine(out) + L-glutamine(in) + Na(+)(in)</text>
        <dbReference type="Rhea" id="RHEA:70863"/>
        <dbReference type="ChEBI" id="CHEBI:29101"/>
        <dbReference type="ChEBI" id="CHEBI:57926"/>
        <dbReference type="ChEBI" id="CHEBI:58359"/>
    </reaction>
</comment>
<comment type="catalytic activity">
    <reaction evidence="5">
        <text>L-threonine(out) + L-glutamine(in) + Na(+)(out) = L-threonine(in) + L-glutamine(out) + Na(+)(in)</text>
        <dbReference type="Rhea" id="RHEA:70879"/>
        <dbReference type="ChEBI" id="CHEBI:29101"/>
        <dbReference type="ChEBI" id="CHEBI:57926"/>
        <dbReference type="ChEBI" id="CHEBI:58359"/>
    </reaction>
</comment>
<comment type="catalytic activity">
    <reaction evidence="5">
        <text>L-asparagine(in) + L-glutamine(out) + Na(+)(out) = L-asparagine(out) + L-glutamine(in) + Na(+)(in)</text>
        <dbReference type="Rhea" id="RHEA:70859"/>
        <dbReference type="ChEBI" id="CHEBI:29101"/>
        <dbReference type="ChEBI" id="CHEBI:58048"/>
        <dbReference type="ChEBI" id="CHEBI:58359"/>
    </reaction>
</comment>
<comment type="catalytic activity">
    <reaction evidence="5">
        <text>L-asparagine(out) + L-glutamine(in) + Na(+)(out) = L-asparagine(in) + L-glutamine(out) + Na(+)(in)</text>
        <dbReference type="Rhea" id="RHEA:70891"/>
        <dbReference type="ChEBI" id="CHEBI:29101"/>
        <dbReference type="ChEBI" id="CHEBI:58048"/>
        <dbReference type="ChEBI" id="CHEBI:58359"/>
    </reaction>
</comment>
<comment type="catalytic activity">
    <reaction evidence="5">
        <text>L-glutamine(in) + L-alanine(out) + Na(+)(out) = L-glutamine(out) + L-alanine(in) + Na(+)(in)</text>
        <dbReference type="Rhea" id="RHEA:70867"/>
        <dbReference type="ChEBI" id="CHEBI:29101"/>
        <dbReference type="ChEBI" id="CHEBI:57972"/>
        <dbReference type="ChEBI" id="CHEBI:58359"/>
    </reaction>
</comment>
<comment type="catalytic activity">
    <reaction evidence="5">
        <text>L-valine(out) + L-glutamine(in) + Na(+)(out) = L-valine(in) + L-glutamine(out) + Na(+)(in)</text>
        <dbReference type="Rhea" id="RHEA:70871"/>
        <dbReference type="ChEBI" id="CHEBI:29101"/>
        <dbReference type="ChEBI" id="CHEBI:57762"/>
        <dbReference type="ChEBI" id="CHEBI:58359"/>
    </reaction>
</comment>
<comment type="catalytic activity">
    <reaction evidence="5">
        <text>L-glutamine(in) + L-methionine(out) + Na(+)(out) = L-glutamine(out) + L-methionine(in) + Na(+)(in)</text>
        <dbReference type="Rhea" id="RHEA:70875"/>
        <dbReference type="ChEBI" id="CHEBI:29101"/>
        <dbReference type="ChEBI" id="CHEBI:57844"/>
        <dbReference type="ChEBI" id="CHEBI:58359"/>
    </reaction>
</comment>
<comment type="catalytic activity">
    <reaction evidence="5">
        <text>L-glutamine(in) + L-glutamate(out) + Na(+)(out) + H(+)(out) = L-glutamine(out) + L-glutamate(in) + Na(+)(in) + H(+)(in)</text>
        <dbReference type="Rhea" id="RHEA:70883"/>
        <dbReference type="ChEBI" id="CHEBI:15378"/>
        <dbReference type="ChEBI" id="CHEBI:29101"/>
        <dbReference type="ChEBI" id="CHEBI:29985"/>
        <dbReference type="ChEBI" id="CHEBI:58359"/>
    </reaction>
</comment>
<comment type="catalytic activity">
    <reaction evidence="5">
        <text>D-serine(in) + L-glutamine(out) + Na(+)(out) = D-serine(out) + L-glutamine(in) + Na(+)(in)</text>
        <dbReference type="Rhea" id="RHEA:75307"/>
        <dbReference type="ChEBI" id="CHEBI:29101"/>
        <dbReference type="ChEBI" id="CHEBI:35247"/>
        <dbReference type="ChEBI" id="CHEBI:58359"/>
    </reaction>
</comment>
<comment type="catalytic activity">
    <reaction evidence="5">
        <text>D-serine(in) + L-alanine(out) + Na(+)(out) = D-serine(out) + L-alanine(in) + Na(+)(in)</text>
        <dbReference type="Rhea" id="RHEA:75311"/>
        <dbReference type="ChEBI" id="CHEBI:29101"/>
        <dbReference type="ChEBI" id="CHEBI:35247"/>
        <dbReference type="ChEBI" id="CHEBI:57972"/>
    </reaction>
</comment>
<comment type="catalytic activity">
    <reaction evidence="1">
        <text>nitrate(in) = nitrate(out)</text>
        <dbReference type="Rhea" id="RHEA:34923"/>
        <dbReference type="ChEBI" id="CHEBI:17632"/>
    </reaction>
</comment>
<comment type="catalytic activity">
    <reaction evidence="1">
        <text>iodide(out) = iodide(in)</text>
        <dbReference type="Rhea" id="RHEA:66324"/>
        <dbReference type="ChEBI" id="CHEBI:16382"/>
    </reaction>
</comment>
<comment type="catalytic activity">
    <reaction evidence="1">
        <text>thiocyanate(in) = thiocyanate(out)</text>
        <dbReference type="Rhea" id="RHEA:75347"/>
        <dbReference type="ChEBI" id="CHEBI:18022"/>
    </reaction>
</comment>
<comment type="subunit">
    <text evidence="5">Homotrimer.</text>
</comment>
<comment type="subcellular location">
    <subcellularLocation>
        <location evidence="8">Cell membrane</location>
        <topology evidence="5">Multi-pass membrane protein</topology>
    </subcellularLocation>
    <subcellularLocation>
        <location evidence="5">Melanosome</location>
    </subcellularLocation>
</comment>
<comment type="similarity">
    <text evidence="10">Belongs to the dicarboxylate/amino acid:cation symporter (DAACS) (TC 2.A.23) family. SLC1A5 subfamily.</text>
</comment>
<evidence type="ECO:0000250" key="1">
    <source>
        <dbReference type="UniProtKB" id="D3ZJ25"/>
    </source>
</evidence>
<evidence type="ECO:0000250" key="2">
    <source>
        <dbReference type="UniProtKB" id="O59010"/>
    </source>
</evidence>
<evidence type="ECO:0000250" key="3">
    <source>
        <dbReference type="UniProtKB" id="P43003"/>
    </source>
</evidence>
<evidence type="ECO:0000250" key="4">
    <source>
        <dbReference type="UniProtKB" id="P51912"/>
    </source>
</evidence>
<evidence type="ECO:0000250" key="5">
    <source>
        <dbReference type="UniProtKB" id="Q15758"/>
    </source>
</evidence>
<evidence type="ECO:0000255" key="6"/>
<evidence type="ECO:0000256" key="7">
    <source>
        <dbReference type="SAM" id="MobiDB-lite"/>
    </source>
</evidence>
<evidence type="ECO:0000269" key="8">
    <source>
    </source>
</evidence>
<evidence type="ECO:0000303" key="9">
    <source>
    </source>
</evidence>
<evidence type="ECO:0000305" key="10"/>
<keyword id="KW-0007">Acetylation</keyword>
<keyword id="KW-0029">Amino-acid transport</keyword>
<keyword id="KW-0050">Antiport</keyword>
<keyword id="KW-1003">Cell membrane</keyword>
<keyword id="KW-0325">Glycoprotein</keyword>
<keyword id="KW-0472">Membrane</keyword>
<keyword id="KW-0479">Metal-binding</keyword>
<keyword id="KW-0597">Phosphoprotein</keyword>
<keyword id="KW-1185">Reference proteome</keyword>
<keyword id="KW-0915">Sodium</keyword>
<keyword id="KW-0769">Symport</keyword>
<keyword id="KW-0812">Transmembrane</keyword>
<keyword id="KW-1133">Transmembrane helix</keyword>
<keyword id="KW-0813">Transport</keyword>
<protein>
    <recommendedName>
        <fullName evidence="9">Neutral amino acid transporter B(0)</fullName>
        <shortName>ATB(0)</shortName>
    </recommendedName>
    <alternativeName>
        <fullName>Sodium-dependent neutral amino acid transporter type 2</fullName>
    </alternativeName>
    <alternativeName>
        <fullName>Solute carrier family 1 member 5</fullName>
    </alternativeName>
</protein>
<reference key="1">
    <citation type="journal article" date="1997" name="Am. J. Physiol.">
        <title>Molecular and functional characterization of intestinal Na(+)-dependent neutral amino acid transporter B0.</title>
        <authorList>
            <person name="Kekuda R."/>
            <person name="Torres-Zamorano V."/>
            <person name="Fei Y.-J."/>
            <person name="Prasad P.D."/>
            <person name="Li H.W."/>
            <person name="Mader L.D."/>
            <person name="Leibach F.H."/>
            <person name="Ganapathy V."/>
        </authorList>
    </citation>
    <scope>NUCLEOTIDE SEQUENCE [MRNA]</scope>
    <scope>FUNCTION</scope>
    <scope>SUBCELLULAR LOCATION</scope>
    <source>
        <tissue>Intestine</tissue>
    </source>
</reference>
<sequence>MVADPPKGDPKGLAAVEPTANGAPAQDPLEDSGAAVGRCCSSRDQVRRCLRANLLVLLTVVAVVAGVALGLAVSGAGGALALGPARLIAFAFPGELLLRLLKMIILPLVVCSLVGGAASLDPSALGRLGAWALLFFLVTTLLASALGVGLALALQPGAAFAAMNASLSSTGAVEQTPSKQVLDSFLDLLRNIFPSNLVSAAFRSYSTSYEEKNFNGTLVKVPVAHEEEGMNILGLVVFAIVFGVALRKLGPEGEPLIRFFNSFNDATMVLVSWIMWYAPVGILFLVASKIVEMDDVGVLFASLGKYILCCLLGHAIHGLLVLPLIYFLFTRKNPYRFLWGILTPLAMAFGTSSSSATLPLMMKCVEERNGVAKHISRFVLPIGATVNMDGAALFQCVAAVFIAQLNRQSLDFVKIITILVTATASSVGAAGIPAGGVLTLAIILEAVSLPVSEISLILAVDWLVDRSCTIINVEGDAFGAGLLQHYVDRTEQRGSEPELTQVKSEVPLGSLPAPNEEGNPLLRHSPGAAGDAGACEKESVM</sequence>
<feature type="chain" id="PRO_0000202084" description="Neutral amino acid transporter B(0)">
    <location>
        <begin position="1"/>
        <end position="541"/>
    </location>
</feature>
<feature type="topological domain" description="Cytoplasmic" evidence="10">
    <location>
        <begin position="1"/>
        <end position="52"/>
    </location>
</feature>
<feature type="transmembrane region" description="Helical; Name=1" evidence="3">
    <location>
        <begin position="53"/>
        <end position="82"/>
    </location>
</feature>
<feature type="topological domain" description="Extracellular" evidence="10">
    <location>
        <begin position="83"/>
        <end position="95"/>
    </location>
</feature>
<feature type="transmembrane region" description="Helical; Name=2" evidence="3">
    <location>
        <begin position="96"/>
        <end position="117"/>
    </location>
</feature>
<feature type="topological domain" description="Cytoplasmic" evidence="10">
    <location>
        <begin position="118"/>
        <end position="131"/>
    </location>
</feature>
<feature type="transmembrane region" description="Helical; Name=3" evidence="3">
    <location>
        <begin position="132"/>
        <end position="154"/>
    </location>
</feature>
<feature type="topological domain" description="Extracellular" evidence="10">
    <location>
        <begin position="155"/>
        <end position="225"/>
    </location>
</feature>
<feature type="transmembrane region" description="Helical; Name=4" evidence="3">
    <location>
        <begin position="226"/>
        <end position="249"/>
    </location>
</feature>
<feature type="topological domain" description="Cytoplasmic" evidence="10">
    <location>
        <begin position="250"/>
        <end position="258"/>
    </location>
</feature>
<feature type="transmembrane region" description="Helical; Name=5" evidence="3">
    <location>
        <begin position="259"/>
        <end position="286"/>
    </location>
</feature>
<feature type="topological domain" description="Extracellular" evidence="10">
    <location>
        <begin position="287"/>
        <end position="307"/>
    </location>
</feature>
<feature type="transmembrane region" description="Helical; Name=6" evidence="3">
    <location>
        <begin position="308"/>
        <end position="329"/>
    </location>
</feature>
<feature type="topological domain" description="Cytoplasmic" evidence="10">
    <location>
        <begin position="330"/>
        <end position="334"/>
    </location>
</feature>
<feature type="intramembrane region" description="Discontinuously helical" evidence="3">
    <location>
        <begin position="335"/>
        <end position="365"/>
    </location>
</feature>
<feature type="topological domain" description="Cytoplasmic" evidence="10">
    <location>
        <begin position="366"/>
        <end position="374"/>
    </location>
</feature>
<feature type="transmembrane region" description="Helical; Name=7" evidence="3">
    <location>
        <begin position="375"/>
        <end position="401"/>
    </location>
</feature>
<feature type="topological domain" description="Extracellular" evidence="10">
    <location>
        <begin position="402"/>
        <end position="414"/>
    </location>
</feature>
<feature type="intramembrane region" description="Discontinuously helical" evidence="3">
    <location>
        <begin position="415"/>
        <end position="448"/>
    </location>
</feature>
<feature type="topological domain" description="Extracellular" evidence="10">
    <location>
        <begin position="449"/>
        <end position="461"/>
    </location>
</feature>
<feature type="transmembrane region" description="Helical; Name=8" evidence="3">
    <location>
        <begin position="462"/>
        <end position="483"/>
    </location>
</feature>
<feature type="topological domain" description="Cytoplasmic" evidence="10">
    <location>
        <begin position="484"/>
        <end position="541"/>
    </location>
</feature>
<feature type="region of interest" description="Disordered" evidence="7">
    <location>
        <begin position="1"/>
        <end position="32"/>
    </location>
</feature>
<feature type="region of interest" description="Disordered" evidence="7">
    <location>
        <begin position="493"/>
        <end position="541"/>
    </location>
</feature>
<feature type="compositionally biased region" description="Basic and acidic residues" evidence="7">
    <location>
        <begin position="1"/>
        <end position="10"/>
    </location>
</feature>
<feature type="binding site" evidence="2">
    <location>
        <position position="383"/>
    </location>
    <ligand>
        <name>Na(+)</name>
        <dbReference type="ChEBI" id="CHEBI:29101"/>
        <label>1</label>
    </ligand>
</feature>
<feature type="binding site" evidence="3">
    <location>
        <position position="385"/>
    </location>
    <ligand>
        <name>Na(+)</name>
        <dbReference type="ChEBI" id="CHEBI:29101"/>
        <label>2</label>
    </ligand>
</feature>
<feature type="binding site" evidence="2">
    <location>
        <position position="387"/>
    </location>
    <ligand>
        <name>Na(+)</name>
        <dbReference type="ChEBI" id="CHEBI:29101"/>
        <label>1</label>
    </ligand>
</feature>
<feature type="binding site" evidence="2">
    <location>
        <position position="472"/>
    </location>
    <ligand>
        <name>Na(+)</name>
        <dbReference type="ChEBI" id="CHEBI:29101"/>
        <label>1</label>
    </ligand>
</feature>
<feature type="binding site" evidence="2">
    <location>
        <position position="476"/>
    </location>
    <ligand>
        <name>Na(+)</name>
        <dbReference type="ChEBI" id="CHEBI:29101"/>
        <label>1</label>
    </ligand>
</feature>
<feature type="modified residue" description="N-acetylmethionine" evidence="5">
    <location>
        <position position="1"/>
    </location>
</feature>
<feature type="modified residue" description="Phosphoserine" evidence="4">
    <location>
        <position position="495"/>
    </location>
</feature>
<feature type="modified residue" description="Phosphoserine" evidence="5">
    <location>
        <position position="504"/>
    </location>
</feature>
<feature type="modified residue" description="Phosphoserine" evidence="5">
    <location>
        <position position="539"/>
    </location>
</feature>
<feature type="glycosylation site" description="N-linked (GlcNAc...) asparagine" evidence="6">
    <location>
        <position position="164"/>
    </location>
</feature>
<feature type="glycosylation site" description="N-linked (GlcNAc...) asparagine" evidence="6">
    <location>
        <position position="215"/>
    </location>
</feature>